<keyword id="KW-0687">Ribonucleoprotein</keyword>
<keyword id="KW-0689">Ribosomal protein</keyword>
<keyword id="KW-0694">RNA-binding</keyword>
<keyword id="KW-0699">rRNA-binding</keyword>
<dbReference type="EMBL" id="CP001050">
    <property type="protein sequence ID" value="ACF31046.1"/>
    <property type="status" value="ALT_INIT"/>
    <property type="molecule type" value="Genomic_DNA"/>
</dbReference>
<dbReference type="RefSeq" id="WP_003690075.1">
    <property type="nucleotide sequence ID" value="NC_011035.1"/>
</dbReference>
<dbReference type="SMR" id="B4RQY7"/>
<dbReference type="GeneID" id="66754305"/>
<dbReference type="KEGG" id="ngk:NGK_2445"/>
<dbReference type="HOGENOM" id="CLU_095071_2_2_4"/>
<dbReference type="Proteomes" id="UP000002564">
    <property type="component" value="Chromosome"/>
</dbReference>
<dbReference type="GO" id="GO:0022625">
    <property type="term" value="C:cytosolic large ribosomal subunit"/>
    <property type="evidence" value="ECO:0007669"/>
    <property type="project" value="TreeGrafter"/>
</dbReference>
<dbReference type="GO" id="GO:0070180">
    <property type="term" value="F:large ribosomal subunit rRNA binding"/>
    <property type="evidence" value="ECO:0007669"/>
    <property type="project" value="TreeGrafter"/>
</dbReference>
<dbReference type="GO" id="GO:0003735">
    <property type="term" value="F:structural constituent of ribosome"/>
    <property type="evidence" value="ECO:0007669"/>
    <property type="project" value="InterPro"/>
</dbReference>
<dbReference type="GO" id="GO:0006412">
    <property type="term" value="P:translation"/>
    <property type="evidence" value="ECO:0007669"/>
    <property type="project" value="UniProtKB-UniRule"/>
</dbReference>
<dbReference type="CDD" id="cd00337">
    <property type="entry name" value="Ribosomal_uL14"/>
    <property type="match status" value="1"/>
</dbReference>
<dbReference type="FunFam" id="2.40.150.20:FF:000001">
    <property type="entry name" value="50S ribosomal protein L14"/>
    <property type="match status" value="1"/>
</dbReference>
<dbReference type="Gene3D" id="2.40.150.20">
    <property type="entry name" value="Ribosomal protein L14"/>
    <property type="match status" value="1"/>
</dbReference>
<dbReference type="HAMAP" id="MF_01367">
    <property type="entry name" value="Ribosomal_uL14"/>
    <property type="match status" value="1"/>
</dbReference>
<dbReference type="InterPro" id="IPR000218">
    <property type="entry name" value="Ribosomal_uL14"/>
</dbReference>
<dbReference type="InterPro" id="IPR005745">
    <property type="entry name" value="Ribosomal_uL14_bac-type"/>
</dbReference>
<dbReference type="InterPro" id="IPR019972">
    <property type="entry name" value="Ribosomal_uL14_CS"/>
</dbReference>
<dbReference type="InterPro" id="IPR036853">
    <property type="entry name" value="Ribosomal_uL14_sf"/>
</dbReference>
<dbReference type="NCBIfam" id="TIGR01067">
    <property type="entry name" value="rplN_bact"/>
    <property type="match status" value="1"/>
</dbReference>
<dbReference type="PANTHER" id="PTHR11761">
    <property type="entry name" value="50S/60S RIBOSOMAL PROTEIN L14/L23"/>
    <property type="match status" value="1"/>
</dbReference>
<dbReference type="PANTHER" id="PTHR11761:SF3">
    <property type="entry name" value="LARGE RIBOSOMAL SUBUNIT PROTEIN UL14M"/>
    <property type="match status" value="1"/>
</dbReference>
<dbReference type="Pfam" id="PF00238">
    <property type="entry name" value="Ribosomal_L14"/>
    <property type="match status" value="1"/>
</dbReference>
<dbReference type="SMART" id="SM01374">
    <property type="entry name" value="Ribosomal_L14"/>
    <property type="match status" value="1"/>
</dbReference>
<dbReference type="SUPFAM" id="SSF50193">
    <property type="entry name" value="Ribosomal protein L14"/>
    <property type="match status" value="1"/>
</dbReference>
<dbReference type="PROSITE" id="PS00049">
    <property type="entry name" value="RIBOSOMAL_L14"/>
    <property type="match status" value="1"/>
</dbReference>
<feature type="chain" id="PRO_0000355826" description="Large ribosomal subunit protein uL14">
    <location>
        <begin position="1"/>
        <end position="122"/>
    </location>
</feature>
<organism>
    <name type="scientific">Neisseria gonorrhoeae (strain NCCP11945)</name>
    <dbReference type="NCBI Taxonomy" id="521006"/>
    <lineage>
        <taxon>Bacteria</taxon>
        <taxon>Pseudomonadati</taxon>
        <taxon>Pseudomonadota</taxon>
        <taxon>Betaproteobacteria</taxon>
        <taxon>Neisseriales</taxon>
        <taxon>Neisseriaceae</taxon>
        <taxon>Neisseria</taxon>
    </lineage>
</organism>
<accession>B4RQY7</accession>
<reference key="1">
    <citation type="journal article" date="2008" name="J. Bacteriol.">
        <title>Complete genome sequence of Neisseria gonorrhoeae NCCP11945.</title>
        <authorList>
            <person name="Chung G.T."/>
            <person name="Yoo J.S."/>
            <person name="Oh H.B."/>
            <person name="Lee Y.S."/>
            <person name="Cha S.H."/>
            <person name="Kim S.J."/>
            <person name="Yoo C.K."/>
        </authorList>
    </citation>
    <scope>NUCLEOTIDE SEQUENCE [LARGE SCALE GENOMIC DNA]</scope>
    <source>
        <strain>NCCP11945</strain>
    </source>
</reference>
<evidence type="ECO:0000255" key="1">
    <source>
        <dbReference type="HAMAP-Rule" id="MF_01367"/>
    </source>
</evidence>
<evidence type="ECO:0000305" key="2"/>
<proteinExistence type="inferred from homology"/>
<protein>
    <recommendedName>
        <fullName evidence="1">Large ribosomal subunit protein uL14</fullName>
    </recommendedName>
    <alternativeName>
        <fullName evidence="2">50S ribosomal protein L14</fullName>
    </alternativeName>
</protein>
<sequence length="122" mass="13403">MIQMQTILDVADNSGARRVMCIKVLGGSKRRYASVGDIIKVAVKDAVPRGRVKKGDVYNAVVVRTAKGVRRPDGALIKFDNNAAVLLNNKLEPLGTRIFGPVTRELRTERFMKIVSLAPEVL</sequence>
<comment type="function">
    <text evidence="1">Binds to 23S rRNA. Forms part of two intersubunit bridges in the 70S ribosome.</text>
</comment>
<comment type="subunit">
    <text evidence="1">Part of the 50S ribosomal subunit. Forms a cluster with proteins L3 and L19. In the 70S ribosome, L14 and L19 interact and together make contacts with the 16S rRNA in bridges B5 and B8.</text>
</comment>
<comment type="similarity">
    <text evidence="1">Belongs to the universal ribosomal protein uL14 family.</text>
</comment>
<comment type="sequence caution" evidence="2">
    <conflict type="erroneous initiation">
        <sequence resource="EMBL-CDS" id="ACF31046"/>
    </conflict>
</comment>
<gene>
    <name evidence="1" type="primary">rplN</name>
    <name type="ordered locus">NGK_2445</name>
</gene>
<name>RL14_NEIG2</name>